<feature type="chain" id="PRO_0000259193" description="Large ribosomal subunit protein bL31">
    <location>
        <begin position="1"/>
        <end position="73"/>
    </location>
</feature>
<accession>Q28UF4</accession>
<organism>
    <name type="scientific">Jannaschia sp. (strain CCS1)</name>
    <dbReference type="NCBI Taxonomy" id="290400"/>
    <lineage>
        <taxon>Bacteria</taxon>
        <taxon>Pseudomonadati</taxon>
        <taxon>Pseudomonadota</taxon>
        <taxon>Alphaproteobacteria</taxon>
        <taxon>Rhodobacterales</taxon>
        <taxon>Roseobacteraceae</taxon>
        <taxon>Jannaschia</taxon>
    </lineage>
</organism>
<keyword id="KW-1185">Reference proteome</keyword>
<keyword id="KW-0687">Ribonucleoprotein</keyword>
<keyword id="KW-0689">Ribosomal protein</keyword>
<keyword id="KW-0694">RNA-binding</keyword>
<keyword id="KW-0699">rRNA-binding</keyword>
<dbReference type="EMBL" id="CP000264">
    <property type="protein sequence ID" value="ABD53658.1"/>
    <property type="molecule type" value="Genomic_DNA"/>
</dbReference>
<dbReference type="RefSeq" id="WP_011453866.1">
    <property type="nucleotide sequence ID" value="NC_007802.1"/>
</dbReference>
<dbReference type="STRING" id="290400.Jann_0741"/>
<dbReference type="KEGG" id="jan:Jann_0741"/>
<dbReference type="eggNOG" id="COG0254">
    <property type="taxonomic scope" value="Bacteria"/>
</dbReference>
<dbReference type="HOGENOM" id="CLU_114306_3_2_5"/>
<dbReference type="OrthoDB" id="9803251at2"/>
<dbReference type="Proteomes" id="UP000008326">
    <property type="component" value="Chromosome"/>
</dbReference>
<dbReference type="GO" id="GO:1990904">
    <property type="term" value="C:ribonucleoprotein complex"/>
    <property type="evidence" value="ECO:0007669"/>
    <property type="project" value="UniProtKB-KW"/>
</dbReference>
<dbReference type="GO" id="GO:0005840">
    <property type="term" value="C:ribosome"/>
    <property type="evidence" value="ECO:0007669"/>
    <property type="project" value="UniProtKB-KW"/>
</dbReference>
<dbReference type="GO" id="GO:0019843">
    <property type="term" value="F:rRNA binding"/>
    <property type="evidence" value="ECO:0007669"/>
    <property type="project" value="UniProtKB-KW"/>
</dbReference>
<dbReference type="GO" id="GO:0003735">
    <property type="term" value="F:structural constituent of ribosome"/>
    <property type="evidence" value="ECO:0007669"/>
    <property type="project" value="InterPro"/>
</dbReference>
<dbReference type="GO" id="GO:0006412">
    <property type="term" value="P:translation"/>
    <property type="evidence" value="ECO:0007669"/>
    <property type="project" value="InterPro"/>
</dbReference>
<dbReference type="Gene3D" id="4.10.830.30">
    <property type="entry name" value="Ribosomal protein L31"/>
    <property type="match status" value="1"/>
</dbReference>
<dbReference type="InterPro" id="IPR034704">
    <property type="entry name" value="Ribosomal_bL28/bL31-like_sf"/>
</dbReference>
<dbReference type="InterPro" id="IPR002150">
    <property type="entry name" value="Ribosomal_bL31"/>
</dbReference>
<dbReference type="InterPro" id="IPR042105">
    <property type="entry name" value="Ribosomal_bL31_sf"/>
</dbReference>
<dbReference type="NCBIfam" id="TIGR00105">
    <property type="entry name" value="L31"/>
    <property type="match status" value="1"/>
</dbReference>
<dbReference type="NCBIfam" id="NF001809">
    <property type="entry name" value="PRK00528.1"/>
    <property type="match status" value="1"/>
</dbReference>
<dbReference type="PANTHER" id="PTHR33280">
    <property type="entry name" value="50S RIBOSOMAL PROTEIN L31, CHLOROPLASTIC"/>
    <property type="match status" value="1"/>
</dbReference>
<dbReference type="PANTHER" id="PTHR33280:SF6">
    <property type="entry name" value="LARGE RIBOSOMAL SUBUNIT PROTEIN BL31A"/>
    <property type="match status" value="1"/>
</dbReference>
<dbReference type="Pfam" id="PF01197">
    <property type="entry name" value="Ribosomal_L31"/>
    <property type="match status" value="1"/>
</dbReference>
<dbReference type="PRINTS" id="PR01249">
    <property type="entry name" value="RIBOSOMALL31"/>
</dbReference>
<dbReference type="SUPFAM" id="SSF143800">
    <property type="entry name" value="L28p-like"/>
    <property type="match status" value="1"/>
</dbReference>
<dbReference type="PROSITE" id="PS01143">
    <property type="entry name" value="RIBOSOMAL_L31"/>
    <property type="match status" value="1"/>
</dbReference>
<protein>
    <recommendedName>
        <fullName evidence="2">Large ribosomal subunit protein bL31</fullName>
    </recommendedName>
    <alternativeName>
        <fullName>50S ribosomal protein L31</fullName>
    </alternativeName>
</protein>
<proteinExistence type="inferred from homology"/>
<sequence>MKKDLHPEYHVINVKMTNGDVVEMRSIWGAEGDTLALDIDPTVHPAWTGGGARLLDTGGRVSKFKKKYEGLGF</sequence>
<reference key="1">
    <citation type="submission" date="2006-02" db="EMBL/GenBank/DDBJ databases">
        <title>Complete sequence of chromosome of Jannaschia sp. CCS1.</title>
        <authorList>
            <consortium name="US DOE Joint Genome Institute"/>
            <person name="Copeland A."/>
            <person name="Lucas S."/>
            <person name="Lapidus A."/>
            <person name="Barry K."/>
            <person name="Detter J.C."/>
            <person name="Glavina del Rio T."/>
            <person name="Hammon N."/>
            <person name="Israni S."/>
            <person name="Pitluck S."/>
            <person name="Brettin T."/>
            <person name="Bruce D."/>
            <person name="Han C."/>
            <person name="Tapia R."/>
            <person name="Gilna P."/>
            <person name="Chertkov O."/>
            <person name="Saunders E."/>
            <person name="Schmutz J."/>
            <person name="Larimer F."/>
            <person name="Land M."/>
            <person name="Kyrpides N."/>
            <person name="Lykidis A."/>
            <person name="Moran M.A."/>
            <person name="Belas R."/>
            <person name="Ye W."/>
            <person name="Buchan A."/>
            <person name="Gonzalez J.M."/>
            <person name="Schell M.A."/>
            <person name="Richardson P."/>
        </authorList>
    </citation>
    <scope>NUCLEOTIDE SEQUENCE [LARGE SCALE GENOMIC DNA]</scope>
    <source>
        <strain>CCS1</strain>
    </source>
</reference>
<gene>
    <name type="primary">rpmE</name>
    <name type="ordered locus">Jann_0741</name>
</gene>
<name>RL31_JANSC</name>
<evidence type="ECO:0000250" key="1"/>
<evidence type="ECO:0000305" key="2"/>
<comment type="function">
    <text evidence="1">Binds the 23S rRNA.</text>
</comment>
<comment type="subunit">
    <text evidence="1">Part of the 50S ribosomal subunit.</text>
</comment>
<comment type="similarity">
    <text evidence="2">Belongs to the bacterial ribosomal protein bL31 family. Type A subfamily.</text>
</comment>